<organism>
    <name type="scientific">Pelargonium hortorum</name>
    <name type="common">Common geranium</name>
    <name type="synonym">Pelargonium inquinans x Pelargonium zonale</name>
    <dbReference type="NCBI Taxonomy" id="4031"/>
    <lineage>
        <taxon>Eukaryota</taxon>
        <taxon>Viridiplantae</taxon>
        <taxon>Streptophyta</taxon>
        <taxon>Embryophyta</taxon>
        <taxon>Tracheophyta</taxon>
        <taxon>Spermatophyta</taxon>
        <taxon>Magnoliopsida</taxon>
        <taxon>eudicotyledons</taxon>
        <taxon>Gunneridae</taxon>
        <taxon>Pentapetalae</taxon>
        <taxon>rosids</taxon>
        <taxon>malvids</taxon>
        <taxon>Geraniales</taxon>
        <taxon>Geraniaceae</taxon>
        <taxon>Pelargonium</taxon>
    </lineage>
</organism>
<gene>
    <name type="primary">ycf2-A</name>
</gene>
<gene>
    <name type="primary">ycf2-B</name>
</gene>
<dbReference type="EMBL" id="M83200">
    <property type="protein sequence ID" value="AAA73173.1"/>
    <property type="molecule type" value="Genomic_DNA"/>
</dbReference>
<dbReference type="EMBL" id="DQ897681">
    <property type="protein sequence ID" value="ABI17302.1"/>
    <property type="molecule type" value="Genomic_DNA"/>
</dbReference>
<dbReference type="EMBL" id="DQ897681">
    <property type="protein sequence ID" value="ABI17338.1"/>
    <property type="molecule type" value="Genomic_DNA"/>
</dbReference>
<dbReference type="PIR" id="T31352">
    <property type="entry name" value="T31352"/>
</dbReference>
<dbReference type="GO" id="GO:0009570">
    <property type="term" value="C:chloroplast stroma"/>
    <property type="evidence" value="ECO:0007669"/>
    <property type="project" value="UniProtKB-SubCell"/>
</dbReference>
<dbReference type="GO" id="GO:0005524">
    <property type="term" value="F:ATP binding"/>
    <property type="evidence" value="ECO:0007669"/>
    <property type="project" value="UniProtKB-KW"/>
</dbReference>
<dbReference type="GO" id="GO:0016887">
    <property type="term" value="F:ATP hydrolysis activity"/>
    <property type="evidence" value="ECO:0007669"/>
    <property type="project" value="InterPro"/>
</dbReference>
<dbReference type="CDD" id="cd19505">
    <property type="entry name" value="RecA-like_Ycf2"/>
    <property type="match status" value="1"/>
</dbReference>
<dbReference type="Gene3D" id="3.40.50.300">
    <property type="entry name" value="P-loop containing nucleotide triphosphate hydrolases"/>
    <property type="match status" value="2"/>
</dbReference>
<dbReference type="HAMAP" id="MF_01330">
    <property type="entry name" value="Ycf2"/>
    <property type="match status" value="1"/>
</dbReference>
<dbReference type="InterPro" id="IPR003593">
    <property type="entry name" value="AAA+_ATPase"/>
</dbReference>
<dbReference type="InterPro" id="IPR003959">
    <property type="entry name" value="ATPase_AAA_core"/>
</dbReference>
<dbReference type="InterPro" id="IPR027417">
    <property type="entry name" value="P-loop_NTPase"/>
</dbReference>
<dbReference type="InterPro" id="IPR008543">
    <property type="entry name" value="Uncharacterised_Ycf2"/>
</dbReference>
<dbReference type="InterPro" id="IPR056777">
    <property type="entry name" value="Ycf2_N"/>
</dbReference>
<dbReference type="PANTHER" id="PTHR33078:SF92">
    <property type="entry name" value="PROTEIN YCF2"/>
    <property type="match status" value="1"/>
</dbReference>
<dbReference type="PANTHER" id="PTHR33078">
    <property type="entry name" value="PROTEIN YCF2-RELATED"/>
    <property type="match status" value="1"/>
</dbReference>
<dbReference type="Pfam" id="PF00004">
    <property type="entry name" value="AAA"/>
    <property type="match status" value="1"/>
</dbReference>
<dbReference type="Pfam" id="PF05695">
    <property type="entry name" value="Ycf2"/>
    <property type="match status" value="4"/>
</dbReference>
<dbReference type="SMART" id="SM00382">
    <property type="entry name" value="AAA"/>
    <property type="match status" value="1"/>
</dbReference>
<dbReference type="SUPFAM" id="SSF52540">
    <property type="entry name" value="P-loop containing nucleoside triphosphate hydrolases"/>
    <property type="match status" value="1"/>
</dbReference>
<comment type="function">
    <text>Probable ATPase of unknown function. Its presence in a non-photosynthetic plant (Epifagus virginiana) and experiments in tobacco indicate that it has an essential function which is probably not related to photosynthesis.</text>
</comment>
<comment type="subcellular location">
    <subcellularLocation>
        <location evidence="1">Plastid</location>
        <location evidence="1">Chloroplast stroma</location>
    </subcellularLocation>
</comment>
<comment type="similarity">
    <text evidence="4">Belongs to the Ycf2 family.</text>
</comment>
<geneLocation type="chloroplast"/>
<reference key="1">
    <citation type="journal article" date="1994" name="Curr. Genet.">
        <title>Structure and evolution of the largest chloroplast gene (ORF2280): internal plasticity and multiple gene loss during angiosperm evolution.</title>
        <authorList>
            <person name="Downie S.R."/>
            <person name="Katz-Downie D.S."/>
            <person name="Wolfe K.H."/>
            <person name="Calie P.J."/>
            <person name="Palmer J.D."/>
        </authorList>
    </citation>
    <scope>NUCLEOTIDE SEQUENCE [GENOMIC DNA]</scope>
    <source>
        <strain>cv. Irene</strain>
    </source>
</reference>
<reference key="2">
    <citation type="journal article" date="2006" name="Mol. Biol. Evol.">
        <title>The complete chloroplast genome sequence of Pelargonium x hortorum: organization and evolution of the largest and most highly rearranged chloroplast genome of land plants.</title>
        <authorList>
            <person name="Chumley T.W."/>
            <person name="Palmer J.D."/>
            <person name="Mower J.P."/>
            <person name="Fourcade H.M."/>
            <person name="Calie P.J."/>
            <person name="Boore J.L."/>
            <person name="Jansen R.K."/>
        </authorList>
    </citation>
    <scope>NUCLEOTIDE SEQUENCE [LARGE SCALE GENOMIC DNA]</scope>
    <source>
        <strain>cv. Ringo White</strain>
    </source>
</reference>
<feature type="chain" id="PRO_0000223064" description="Protein Ycf2">
    <location>
        <begin position="1"/>
        <end position="2110"/>
    </location>
</feature>
<feature type="region of interest" description="Disordered" evidence="3">
    <location>
        <begin position="1852"/>
        <end position="1876"/>
    </location>
</feature>
<feature type="compositionally biased region" description="Acidic residues" evidence="3">
    <location>
        <begin position="1854"/>
        <end position="1866"/>
    </location>
</feature>
<feature type="binding site" evidence="2">
    <location>
        <begin position="1336"/>
        <end position="1343"/>
    </location>
    <ligand>
        <name>ATP</name>
        <dbReference type="ChEBI" id="CHEBI:30616"/>
    </ligand>
</feature>
<feature type="sequence variant" description="In strain: cv. Irene.">
    <original>D</original>
    <variation>V</variation>
    <location>
        <position position="633"/>
    </location>
</feature>
<feature type="sequence variant" description="In strain: cv. Irene.">
    <original>L</original>
    <variation>F</variation>
    <location>
        <position position="1322"/>
    </location>
</feature>
<feature type="sequence variant" description="In strain: cv. Irene.">
    <original>S</original>
    <variation>L</variation>
    <location>
        <position position="1658"/>
    </location>
</feature>
<feature type="sequence variant" description="In strain: cv. Irene.">
    <original>KS</original>
    <variation>NW</variation>
    <location>
        <begin position="1692"/>
        <end position="1693"/>
    </location>
</feature>
<feature type="sequence variant" description="In strain: cv. Irene.">
    <original>AC</original>
    <variation>LS</variation>
    <location>
        <begin position="1777"/>
        <end position="1778"/>
    </location>
</feature>
<feature type="sequence variant" description="In strain: cv. Irene.">
    <original>RAEPS</original>
    <variation>GRTK</variation>
    <location>
        <begin position="1791"/>
        <end position="1795"/>
    </location>
</feature>
<feature type="sequence variant" description="In strain: cv. Irene.">
    <original>EA</original>
    <variation>DG</variation>
    <location>
        <begin position="1847"/>
        <end position="1848"/>
    </location>
</feature>
<name>YCF2_PELHO</name>
<proteinExistence type="inferred from homology"/>
<evidence type="ECO:0000250" key="1"/>
<evidence type="ECO:0000255" key="2"/>
<evidence type="ECO:0000256" key="3">
    <source>
        <dbReference type="SAM" id="MobiDB-lite"/>
    </source>
</evidence>
<evidence type="ECO:0000305" key="4"/>
<protein>
    <recommendedName>
        <fullName>Protein Ycf2</fullName>
    </recommendedName>
</protein>
<keyword id="KW-0067">ATP-binding</keyword>
<keyword id="KW-0150">Chloroplast</keyword>
<keyword id="KW-0547">Nucleotide-binding</keyword>
<keyword id="KW-0934">Plastid</keyword>
<accession>Q32836</accession>
<accession>Q06FN5</accession>
<sequence>MDEQEFKLFLKFFILELKGILREIKNSHQLLDSWTKLNSLGTLIQIFFNPERAFQLLDPRVWKILLSRNSRGWRKTRHFTIGRVLLFVVVVLMYRMSRRNMVENKKSYLTGVLPIPLNPIGHRNDTLEESIGFSNINRLILPLLYLPKGKKIPESSFLDPNESTWALPITKKSIMPESRWGSRWWCSWVGKRRDSSCKRAHKTVAGIEISFKEKKSKYLEFLEDSEYPTLINQREIQQIKEESILWHPSPSLERTEEEIKEFLGNSTRSLRSFFSDRWSELYLSSNPTERFTRDQKLLKQDLSFVPYRRSENQEIVNLFKIITYLQKTVSIYPISSDPGCDRVPKDELDVDSSKKISFFKKNPFFDLLNLFHDRSRGGYTLERDFESEERFEERADLFTLSITEPDQVYHNSPKMDLIHIQEKGYIRKVLDRFFLMNRSARNFESGIPGAQIGNETLSHRTLMKYTVNRHFSSLKKSRKKSFDPLLFIERSMNRDPAAYRDKWSKGGKTFQEHLEHFVSEQKNRFKVQKSRFKAVFDRFHQSQYSIDWSVFIDKQDFPKARLFFLFVLVRSFLYKSLPFLLSKLPLLLSKLPLLVSKVLPLLSKLLPFFFVSCGNIPIHRSEIRIYELKGPTDQPCNPLLESIGLQILHLNKLKPCLLDDHETSQKSKIVGTIDNTDSYFSILFDDEENWMNPVKAFQRSSLISAFYKANRLRFLNNPHRFSFYCNKIFPFVVEKARFKNSDFLYGQFLKTFFIRKKPFSLCGEKHAFGERATLLPIESEVSKILIPQVSKILIPDDFPQSGDERYNLCKSFHFPTRSVPLVDRALYSIADISERPLTEGQMVNLERTSFQPLSDIHLSDSERKNLHQDLNFNSNMGLIHTPYSEKDLPSEKRKKRNLGRNLKKCVEKGQMFRTLLSKMYRTLLSKWNLFQTYMPWFLTSTGYKYLTLLFLDLFSDLVPILSLGIRQNCVSLFDHILGDIRDDIRQGVIRPWQILQEKWVLPQRNRIREISRMCLRNLTLSAERIRRNNESPLTHTHLRSPNVLEFLYSTLLLLLVAGYLVCTYLSRLSKDYGELQTELKKVKSLMIPSYTIELRKLMDRYPPSELNSFGLKNLFLVAMEELKESLSVVGNMLEGGGRAYGVEAIFSNWNLNLIDISDLISLIPNPIDRITFSINTRHLSHTSKEIYSFIRKRERVYGAWIDDKIESLLSTSVAIDDCDRGNLLQFSTLTLTTEKGVDQILLSLTQSSKNASGSQMIEQPGEMYLRHVVDLQKKYLMGYEFNTSSLAERRIFLAHYQTMTYSKTSCGVNAFHFPSHEKPFSLRLDLSPPRGILVIGSIGTGRSYLIKSLAKNTHFPLITLEMEARSSWPFFQHLDEIYGDQLEYVYDDTSLSVEVEEEEDTSWGIEEWSLPDTREDDEIEDQAEMDTRRDLDGIEYTHAIQDMIDLGISVDAQLNFLPESILINEIEGHDVDELDEAETELWELWMEEWDRHLLGISLQFALVRAMTPCILWIPNIHDVDLEDRTTLAGLMNSLSGDSEGRSTRKTLVIASTHLPKKVDPALIASNRFNTCIKVRRLLSTQERERFFTLSYTRGFHFEKEIFDTNGFRSITTQDLAALTNEALSISITQKKSIIDTNTIRFALHRQTWAVESRSISISDHGILFYQTGRALAQNLFLSQGLIDPISVYIKKKSCNDDGYSYLYRWYLELGTSMKRLTILLYLLSCFAGSVAQDLWSPPGPDDKAEMFSYGLVENDSHLAQGLLELEGALVASGTEKACSRFDNDQVTLLFRAEPSLDRMQDGFCSIFEQEGEEAAPGLEKPLVTHIVSAPRIWNPWLILFDWIDIEEASRKEEEAELQDEEAELQDEGAGRKDEEAELQEFQDLEDPQDQEGGLQELQGLQKEEAYLYQKALELQAQEDELQKYGPGFLESGTIMKKYPTRNRFRFFTEQGFFQASQFIWYPADSLFFLLKEQALGFVFSQPEFFADEEISKEGLLALTVQRLPFSTTCHWFIKKRQERHFEFLIHRERWLRTNSSLSNGFFCSKTQTLFESYQYLSNLFLSNGRLVDQMTKTLLRKRWIFPDEMKIQIGFMYTGEGFPITSPERYVAMK</sequence>